<reference key="1">
    <citation type="journal article" date="1995" name="Science">
        <title>Whole-genome random sequencing and assembly of Haemophilus influenzae Rd.</title>
        <authorList>
            <person name="Fleischmann R.D."/>
            <person name="Adams M.D."/>
            <person name="White O."/>
            <person name="Clayton R.A."/>
            <person name="Kirkness E.F."/>
            <person name="Kerlavage A.R."/>
            <person name="Bult C.J."/>
            <person name="Tomb J.-F."/>
            <person name="Dougherty B.A."/>
            <person name="Merrick J.M."/>
            <person name="McKenney K."/>
            <person name="Sutton G.G."/>
            <person name="FitzHugh W."/>
            <person name="Fields C.A."/>
            <person name="Gocayne J.D."/>
            <person name="Scott J.D."/>
            <person name="Shirley R."/>
            <person name="Liu L.-I."/>
            <person name="Glodek A."/>
            <person name="Kelley J.M."/>
            <person name="Weidman J.F."/>
            <person name="Phillips C.A."/>
            <person name="Spriggs T."/>
            <person name="Hedblom E."/>
            <person name="Cotton M.D."/>
            <person name="Utterback T.R."/>
            <person name="Hanna M.C."/>
            <person name="Nguyen D.T."/>
            <person name="Saudek D.M."/>
            <person name="Brandon R.C."/>
            <person name="Fine L.D."/>
            <person name="Fritchman J.L."/>
            <person name="Fuhrmann J.L."/>
            <person name="Geoghagen N.S.M."/>
            <person name="Gnehm C.L."/>
            <person name="McDonald L.A."/>
            <person name="Small K.V."/>
            <person name="Fraser C.M."/>
            <person name="Smith H.O."/>
            <person name="Venter J.C."/>
        </authorList>
    </citation>
    <scope>NUCLEOTIDE SEQUENCE [LARGE SCALE GENOMIC DNA]</scope>
    <source>
        <strain>ATCC 51907 / DSM 11121 / KW20 / Rd</strain>
    </source>
</reference>
<protein>
    <recommendedName>
        <fullName evidence="1">Cell division protein FtsQ</fullName>
    </recommendedName>
</protein>
<comment type="function">
    <text evidence="1">Essential cell division protein. May link together the upstream cell division proteins, which are predominantly cytoplasmic, with the downstream cell division proteins, which are predominantly periplasmic. May control correct divisome assembly.</text>
</comment>
<comment type="subunit">
    <text evidence="1">Part of a complex composed of FtsB, FtsL and FtsQ.</text>
</comment>
<comment type="subcellular location">
    <subcellularLocation>
        <location evidence="1">Cell inner membrane</location>
        <topology evidence="1">Single-pass type II membrane protein</topology>
    </subcellularLocation>
    <text evidence="1">Localizes to the division septum.</text>
</comment>
<comment type="similarity">
    <text evidence="1">Belongs to the FtsQ/DivIB family. FtsQ subfamily.</text>
</comment>
<dbReference type="EMBL" id="L42023">
    <property type="protein sequence ID" value="AAC22796.1"/>
    <property type="molecule type" value="Genomic_DNA"/>
</dbReference>
<dbReference type="PIR" id="G64185">
    <property type="entry name" value="G64185"/>
</dbReference>
<dbReference type="RefSeq" id="NP_439299.1">
    <property type="nucleotide sequence ID" value="NC_000907.1"/>
</dbReference>
<dbReference type="SMR" id="P45067"/>
<dbReference type="STRING" id="71421.HI_1141"/>
<dbReference type="EnsemblBacteria" id="AAC22796">
    <property type="protein sequence ID" value="AAC22796"/>
    <property type="gene ID" value="HI_1141"/>
</dbReference>
<dbReference type="KEGG" id="hin:HI_1141"/>
<dbReference type="PATRIC" id="fig|71421.8.peg.1191"/>
<dbReference type="eggNOG" id="COG1589">
    <property type="taxonomic scope" value="Bacteria"/>
</dbReference>
<dbReference type="HOGENOM" id="CLU_064041_2_0_6"/>
<dbReference type="OrthoDB" id="9790370at2"/>
<dbReference type="PhylomeDB" id="P45067"/>
<dbReference type="BioCyc" id="HINF71421:G1GJ1-1174-MONOMER"/>
<dbReference type="Proteomes" id="UP000000579">
    <property type="component" value="Chromosome"/>
</dbReference>
<dbReference type="GO" id="GO:0032153">
    <property type="term" value="C:cell division site"/>
    <property type="evidence" value="ECO:0000318"/>
    <property type="project" value="GO_Central"/>
</dbReference>
<dbReference type="GO" id="GO:1990587">
    <property type="term" value="C:FtsQBL complex"/>
    <property type="evidence" value="ECO:0000318"/>
    <property type="project" value="GO_Central"/>
</dbReference>
<dbReference type="GO" id="GO:0005886">
    <property type="term" value="C:plasma membrane"/>
    <property type="evidence" value="ECO:0000318"/>
    <property type="project" value="GO_Central"/>
</dbReference>
<dbReference type="GO" id="GO:0000917">
    <property type="term" value="P:division septum assembly"/>
    <property type="evidence" value="ECO:0000318"/>
    <property type="project" value="GO_Central"/>
</dbReference>
<dbReference type="GO" id="GO:0043093">
    <property type="term" value="P:FtsZ-dependent cytokinesis"/>
    <property type="evidence" value="ECO:0000318"/>
    <property type="project" value="GO_Central"/>
</dbReference>
<dbReference type="Gene3D" id="3.40.50.11690">
    <property type="entry name" value="Cell division protein FtsQ/DivIB"/>
    <property type="match status" value="1"/>
</dbReference>
<dbReference type="Gene3D" id="3.10.20.310">
    <property type="entry name" value="membrane protein fhac"/>
    <property type="match status" value="1"/>
</dbReference>
<dbReference type="HAMAP" id="MF_00911">
    <property type="entry name" value="FtsQ_subfam"/>
    <property type="match status" value="1"/>
</dbReference>
<dbReference type="InterPro" id="IPR005548">
    <property type="entry name" value="Cell_div_FtsQ/DivIB_C"/>
</dbReference>
<dbReference type="InterPro" id="IPR026579">
    <property type="entry name" value="FtsQ"/>
</dbReference>
<dbReference type="InterPro" id="IPR045335">
    <property type="entry name" value="FtsQ_C_sf"/>
</dbReference>
<dbReference type="InterPro" id="IPR034746">
    <property type="entry name" value="POTRA"/>
</dbReference>
<dbReference type="InterPro" id="IPR013685">
    <property type="entry name" value="POTRA_FtsQ_type"/>
</dbReference>
<dbReference type="PANTHER" id="PTHR35851">
    <property type="entry name" value="CELL DIVISION PROTEIN FTSQ"/>
    <property type="match status" value="1"/>
</dbReference>
<dbReference type="PANTHER" id="PTHR35851:SF1">
    <property type="entry name" value="CELL DIVISION PROTEIN FTSQ"/>
    <property type="match status" value="1"/>
</dbReference>
<dbReference type="Pfam" id="PF03799">
    <property type="entry name" value="FtsQ_DivIB_C"/>
    <property type="match status" value="1"/>
</dbReference>
<dbReference type="Pfam" id="PF08478">
    <property type="entry name" value="POTRA_1"/>
    <property type="match status" value="1"/>
</dbReference>
<dbReference type="PROSITE" id="PS51779">
    <property type="entry name" value="POTRA"/>
    <property type="match status" value="1"/>
</dbReference>
<organism>
    <name type="scientific">Haemophilus influenzae (strain ATCC 51907 / DSM 11121 / KW20 / Rd)</name>
    <dbReference type="NCBI Taxonomy" id="71421"/>
    <lineage>
        <taxon>Bacteria</taxon>
        <taxon>Pseudomonadati</taxon>
        <taxon>Pseudomonadota</taxon>
        <taxon>Gammaproteobacteria</taxon>
        <taxon>Pasteurellales</taxon>
        <taxon>Pasteurellaceae</taxon>
        <taxon>Haemophilus</taxon>
    </lineage>
</organism>
<feature type="chain" id="PRO_0000160581" description="Cell division protein FtsQ">
    <location>
        <begin position="1"/>
        <end position="254"/>
    </location>
</feature>
<feature type="topological domain" description="Cytoplasmic" evidence="1">
    <location>
        <begin position="1"/>
        <end position="27"/>
    </location>
</feature>
<feature type="transmembrane region" description="Helical" evidence="1">
    <location>
        <begin position="28"/>
        <end position="48"/>
    </location>
</feature>
<feature type="topological domain" description="Periplasmic" evidence="1">
    <location>
        <begin position="49"/>
        <end position="254"/>
    </location>
</feature>
<feature type="domain" description="POTRA" evidence="2">
    <location>
        <begin position="54"/>
        <end position="124"/>
    </location>
</feature>
<name>FTSQ_HAEIN</name>
<gene>
    <name evidence="1" type="primary">ftsQ</name>
    <name type="ordered locus">HI_1141</name>
</gene>
<sequence length="254" mass="29323">MNILKRKTPQNIRFGEQKPKYYFHIRAFAVLLGVFFLLGVYFNWQSILEKMDDKPISAFALVGQNTFTTADDIKESLLKMGELKGFWGQDVAPIQEQIEALPWVKGAIVRKMWPNRLSIWVSEYQPVAFWNQNQFVTLDGIVFQLPSVRLTAKNLPYLGGPDYQSLKVIETWNQIYINLKSNNIMAKGINIDDRGAWQVQLDNDIVLKLGRGDWKSKLERFVTIYPQIDVPENKKIDYIDLRYTAGAAVGMVDR</sequence>
<proteinExistence type="inferred from homology"/>
<keyword id="KW-0131">Cell cycle</keyword>
<keyword id="KW-0132">Cell division</keyword>
<keyword id="KW-0997">Cell inner membrane</keyword>
<keyword id="KW-1003">Cell membrane</keyword>
<keyword id="KW-0472">Membrane</keyword>
<keyword id="KW-1185">Reference proteome</keyword>
<keyword id="KW-0812">Transmembrane</keyword>
<keyword id="KW-1133">Transmembrane helix</keyword>
<accession>P45067</accession>
<evidence type="ECO:0000255" key="1">
    <source>
        <dbReference type="HAMAP-Rule" id="MF_00911"/>
    </source>
</evidence>
<evidence type="ECO:0000255" key="2">
    <source>
        <dbReference type="PROSITE-ProRule" id="PRU01115"/>
    </source>
</evidence>